<keyword id="KW-0131">Cell cycle</keyword>
<keyword id="KW-0132">Cell division</keyword>
<keyword id="KW-1003">Cell membrane</keyword>
<keyword id="KW-0133">Cell shape</keyword>
<keyword id="KW-0961">Cell wall biogenesis/degradation</keyword>
<keyword id="KW-0328">Glycosyltransferase</keyword>
<keyword id="KW-0472">Membrane</keyword>
<keyword id="KW-0573">Peptidoglycan synthesis</keyword>
<keyword id="KW-0808">Transferase</keyword>
<protein>
    <recommendedName>
        <fullName evidence="1">UDP-N-acetylglucosamine--N-acetylmuramyl-(pentapeptide) pyrophosphoryl-undecaprenol N-acetylglucosamine transferase</fullName>
        <ecNumber evidence="1">2.4.1.227</ecNumber>
    </recommendedName>
    <alternativeName>
        <fullName evidence="1">Undecaprenyl-PP-MurNAc-pentapeptide-UDPGlcNAc GlcNAc transferase</fullName>
    </alternativeName>
</protein>
<gene>
    <name evidence="1" type="primary">murG</name>
    <name type="ordered locus">BLD_0181</name>
</gene>
<name>MURG_BIFLD</name>
<accession>B3DQN1</accession>
<comment type="function">
    <text evidence="1">Cell wall formation. Catalyzes the transfer of a GlcNAc subunit on undecaprenyl-pyrophosphoryl-MurNAc-pentapeptide (lipid intermediate I) to form undecaprenyl-pyrophosphoryl-MurNAc-(pentapeptide)GlcNAc (lipid intermediate II).</text>
</comment>
<comment type="catalytic activity">
    <reaction evidence="1">
        <text>di-trans,octa-cis-undecaprenyl diphospho-N-acetyl-alpha-D-muramoyl-L-alanyl-D-glutamyl-meso-2,6-diaminopimeloyl-D-alanyl-D-alanine + UDP-N-acetyl-alpha-D-glucosamine = di-trans,octa-cis-undecaprenyl diphospho-[N-acetyl-alpha-D-glucosaminyl-(1-&gt;4)]-N-acetyl-alpha-D-muramoyl-L-alanyl-D-glutamyl-meso-2,6-diaminopimeloyl-D-alanyl-D-alanine + UDP + H(+)</text>
        <dbReference type="Rhea" id="RHEA:31227"/>
        <dbReference type="ChEBI" id="CHEBI:15378"/>
        <dbReference type="ChEBI" id="CHEBI:57705"/>
        <dbReference type="ChEBI" id="CHEBI:58223"/>
        <dbReference type="ChEBI" id="CHEBI:61387"/>
        <dbReference type="ChEBI" id="CHEBI:61388"/>
        <dbReference type="EC" id="2.4.1.227"/>
    </reaction>
</comment>
<comment type="pathway">
    <text evidence="1">Cell wall biogenesis; peptidoglycan biosynthesis.</text>
</comment>
<comment type="subcellular location">
    <subcellularLocation>
        <location evidence="1">Cell membrane</location>
        <topology evidence="1">Peripheral membrane protein</topology>
        <orientation evidence="1">Cytoplasmic side</orientation>
    </subcellularLocation>
</comment>
<comment type="similarity">
    <text evidence="1">Belongs to the glycosyltransferase 28 family. MurG subfamily.</text>
</comment>
<organism>
    <name type="scientific">Bifidobacterium longum (strain DJO10A)</name>
    <dbReference type="NCBI Taxonomy" id="205913"/>
    <lineage>
        <taxon>Bacteria</taxon>
        <taxon>Bacillati</taxon>
        <taxon>Actinomycetota</taxon>
        <taxon>Actinomycetes</taxon>
        <taxon>Bifidobacteriales</taxon>
        <taxon>Bifidobacteriaceae</taxon>
        <taxon>Bifidobacterium</taxon>
    </lineage>
</organism>
<proteinExistence type="inferred from homology"/>
<dbReference type="EC" id="2.4.1.227" evidence="1"/>
<dbReference type="EMBL" id="CP000605">
    <property type="protein sequence ID" value="ACD97627.1"/>
    <property type="molecule type" value="Genomic_DNA"/>
</dbReference>
<dbReference type="RefSeq" id="WP_007052550.1">
    <property type="nucleotide sequence ID" value="NZ_AABM02000003.1"/>
</dbReference>
<dbReference type="SMR" id="B3DQN1"/>
<dbReference type="CAZy" id="GT28">
    <property type="family name" value="Glycosyltransferase Family 28"/>
</dbReference>
<dbReference type="KEGG" id="blj:BLD_0181"/>
<dbReference type="HOGENOM" id="CLU_037404_1_0_11"/>
<dbReference type="UniPathway" id="UPA00219"/>
<dbReference type="Proteomes" id="UP000002419">
    <property type="component" value="Chromosome"/>
</dbReference>
<dbReference type="GO" id="GO:0005886">
    <property type="term" value="C:plasma membrane"/>
    <property type="evidence" value="ECO:0007669"/>
    <property type="project" value="UniProtKB-SubCell"/>
</dbReference>
<dbReference type="GO" id="GO:0051991">
    <property type="term" value="F:UDP-N-acetyl-D-glucosamine:N-acetylmuramoyl-L-alanyl-D-glutamyl-meso-2,6-diaminopimelyl-D-alanyl-D-alanine-diphosphoundecaprenol 4-beta-N-acetylglucosaminlytransferase activity"/>
    <property type="evidence" value="ECO:0007669"/>
    <property type="project" value="RHEA"/>
</dbReference>
<dbReference type="GO" id="GO:0050511">
    <property type="term" value="F:undecaprenyldiphospho-muramoylpentapeptide beta-N-acetylglucosaminyltransferase activity"/>
    <property type="evidence" value="ECO:0007669"/>
    <property type="project" value="UniProtKB-UniRule"/>
</dbReference>
<dbReference type="GO" id="GO:0005975">
    <property type="term" value="P:carbohydrate metabolic process"/>
    <property type="evidence" value="ECO:0007669"/>
    <property type="project" value="InterPro"/>
</dbReference>
<dbReference type="GO" id="GO:0051301">
    <property type="term" value="P:cell division"/>
    <property type="evidence" value="ECO:0007669"/>
    <property type="project" value="UniProtKB-KW"/>
</dbReference>
<dbReference type="GO" id="GO:0071555">
    <property type="term" value="P:cell wall organization"/>
    <property type="evidence" value="ECO:0007669"/>
    <property type="project" value="UniProtKB-KW"/>
</dbReference>
<dbReference type="GO" id="GO:0030259">
    <property type="term" value="P:lipid glycosylation"/>
    <property type="evidence" value="ECO:0007669"/>
    <property type="project" value="UniProtKB-UniRule"/>
</dbReference>
<dbReference type="GO" id="GO:0009252">
    <property type="term" value="P:peptidoglycan biosynthetic process"/>
    <property type="evidence" value="ECO:0007669"/>
    <property type="project" value="UniProtKB-UniRule"/>
</dbReference>
<dbReference type="GO" id="GO:0008360">
    <property type="term" value="P:regulation of cell shape"/>
    <property type="evidence" value="ECO:0007669"/>
    <property type="project" value="UniProtKB-KW"/>
</dbReference>
<dbReference type="CDD" id="cd03785">
    <property type="entry name" value="GT28_MurG"/>
    <property type="match status" value="1"/>
</dbReference>
<dbReference type="Gene3D" id="3.40.50.2000">
    <property type="entry name" value="Glycogen Phosphorylase B"/>
    <property type="match status" value="2"/>
</dbReference>
<dbReference type="HAMAP" id="MF_00033">
    <property type="entry name" value="MurG"/>
    <property type="match status" value="1"/>
</dbReference>
<dbReference type="InterPro" id="IPR006009">
    <property type="entry name" value="GlcNAc_MurG"/>
</dbReference>
<dbReference type="InterPro" id="IPR007235">
    <property type="entry name" value="Glyco_trans_28_C"/>
</dbReference>
<dbReference type="InterPro" id="IPR004276">
    <property type="entry name" value="GlycoTrans_28_N"/>
</dbReference>
<dbReference type="PANTHER" id="PTHR21015:SF22">
    <property type="entry name" value="GLYCOSYLTRANSFERASE"/>
    <property type="match status" value="1"/>
</dbReference>
<dbReference type="PANTHER" id="PTHR21015">
    <property type="entry name" value="UDP-N-ACETYLGLUCOSAMINE--N-ACETYLMURAMYL-(PENTAPEPTIDE) PYROPHOSPHORYL-UNDECAPRENOL N-ACETYLGLUCOSAMINE TRANSFERASE 1"/>
    <property type="match status" value="1"/>
</dbReference>
<dbReference type="Pfam" id="PF04101">
    <property type="entry name" value="Glyco_tran_28_C"/>
    <property type="match status" value="1"/>
</dbReference>
<dbReference type="Pfam" id="PF03033">
    <property type="entry name" value="Glyco_transf_28"/>
    <property type="match status" value="1"/>
</dbReference>
<dbReference type="SUPFAM" id="SSF53756">
    <property type="entry name" value="UDP-Glycosyltransferase/glycogen phosphorylase"/>
    <property type="match status" value="1"/>
</dbReference>
<sequence length="393" mass="41511">MNQGTPHIVLAGGGTAGHVNPLLAVAGAIRDIEPTAQVTVIGTAVGLEKDLVPEAGYELDTIEKVPFPRRPNLYMLRFPAKWKRETAKVRSILETRHADVVAGFGGYASAPVYATAHKMGIPIAIHEQNARAGMANKLGARWADFIGTVYEGTGLKPRAGADVERVGLPLRPAIASLTKRIGDDRAAVRRESAAQLGVDPNRPLVLVTGGSLGAQSLNRAIASSAADLLAHAQIIHLTGRGKISEVRELVTASAGADVLTGIGPESAGQGDYHTAEYLERIDLAFACADLVICRAGAGSVSELAALGLPAIYVPLPIGNGEQRFNAEPVVNAGGGLLVADKDLTPQWVHEHVPDLLADHERLAEFGRKAWEYGIRNAAEIMARHVLQLAEPSK</sequence>
<feature type="chain" id="PRO_1000090405" description="UDP-N-acetylglucosamine--N-acetylmuramyl-(pentapeptide) pyrophosphoryl-undecaprenol N-acetylglucosamine transferase">
    <location>
        <begin position="1"/>
        <end position="393"/>
    </location>
</feature>
<feature type="binding site" evidence="1">
    <location>
        <begin position="15"/>
        <end position="17"/>
    </location>
    <ligand>
        <name>UDP-N-acetyl-alpha-D-glucosamine</name>
        <dbReference type="ChEBI" id="CHEBI:57705"/>
    </ligand>
</feature>
<feature type="binding site" evidence="1">
    <location>
        <position position="129"/>
    </location>
    <ligand>
        <name>UDP-N-acetyl-alpha-D-glucosamine</name>
        <dbReference type="ChEBI" id="CHEBI:57705"/>
    </ligand>
</feature>
<feature type="binding site" evidence="1">
    <location>
        <position position="171"/>
    </location>
    <ligand>
        <name>UDP-N-acetyl-alpha-D-glucosamine</name>
        <dbReference type="ChEBI" id="CHEBI:57705"/>
    </ligand>
</feature>
<feature type="binding site" evidence="1">
    <location>
        <position position="211"/>
    </location>
    <ligand>
        <name>UDP-N-acetyl-alpha-D-glucosamine</name>
        <dbReference type="ChEBI" id="CHEBI:57705"/>
    </ligand>
</feature>
<feature type="binding site" evidence="1">
    <location>
        <position position="322"/>
    </location>
    <ligand>
        <name>UDP-N-acetyl-alpha-D-glucosamine</name>
        <dbReference type="ChEBI" id="CHEBI:57705"/>
    </ligand>
</feature>
<evidence type="ECO:0000255" key="1">
    <source>
        <dbReference type="HAMAP-Rule" id="MF_00033"/>
    </source>
</evidence>
<reference key="1">
    <citation type="journal article" date="2008" name="BMC Genomics">
        <title>Comparative genomic analysis of the gut bacterium Bifidobacterium longum reveals loci susceptible to deletion during pure culture growth.</title>
        <authorList>
            <person name="Lee J.H."/>
            <person name="Karamychev V.N."/>
            <person name="Kozyavkin S.A."/>
            <person name="Mills D."/>
            <person name="Pavlov A.R."/>
            <person name="Pavlova N.V."/>
            <person name="Polouchine N.N."/>
            <person name="Richardson P.M."/>
            <person name="Shakhova V.V."/>
            <person name="Slesarev A.I."/>
            <person name="Weimer B."/>
            <person name="O'Sullivan D.J."/>
        </authorList>
    </citation>
    <scope>NUCLEOTIDE SEQUENCE [LARGE SCALE GENOMIC DNA]</scope>
    <source>
        <strain>DJO10A</strain>
    </source>
</reference>